<organism>
    <name type="scientific">Canine adenovirus serotype 1 (strain CLL)</name>
    <name type="common">CAdV-1</name>
    <name type="synonym">Canine adenovirus 1 (strain CLL)</name>
    <dbReference type="NCBI Taxonomy" id="69150"/>
    <lineage>
        <taxon>Viruses</taxon>
        <taxon>Varidnaviria</taxon>
        <taxon>Bamfordvirae</taxon>
        <taxon>Preplasmiviricota</taxon>
        <taxon>Tectiliviricetes</taxon>
        <taxon>Rowavirales</taxon>
        <taxon>Adenoviridae</taxon>
        <taxon>Mastadenovirus</taxon>
        <taxon>Canine mastadenovirus A</taxon>
    </lineage>
</organism>
<organismHost>
    <name type="scientific">Canis lupus familiaris</name>
    <name type="common">Dog</name>
    <name type="synonym">Canis familiaris</name>
    <dbReference type="NCBI Taxonomy" id="9615"/>
</organismHost>
<gene>
    <name evidence="1" type="primary">IX</name>
</gene>
<comment type="function">
    <text evidence="1">Structural component of the virion that acts as a cement protein on the capsid exterior and forms triskelion structures consisting of three molecules that stabilize three hexon trimers at the center of each icosahedral facet and fixes the peripentonal hexons. Dispensable for assembly. During virus entry, recruits the anterograde motor kinesin-1 to the capsid docked at the nuclear pore complex thereby subjecting the docked capsid to a pulling force. The resulting tension leads to capsid disruption, dispersion of capsid fragments toward cell periphery and eventually viral DNA entry into the host nucleus.</text>
</comment>
<comment type="subunit">
    <text evidence="1">Homotrimer. Interacts with hexon protein; this interaction tethers the hexons together. Self-interacts with adjacent proteins. Interacts with kinesin light chain KLC1; this interaction leads to capsid disruption at the nuclear pore complex during virus entry into host cell.</text>
</comment>
<comment type="subcellular location">
    <subcellularLocation>
        <location evidence="1">Virion</location>
    </subcellularLocation>
    <subcellularLocation>
        <location evidence="1">Host nucleus</location>
    </subcellularLocation>
    <text evidence="1">Located in the canyons between the hexons on the outer surface of the capsid. Forms a sort of hairnet on the outer side of the virion. Present in 240 copies per virion.</text>
</comment>
<comment type="induction">
    <text evidence="1">Expressed in the intermediate phase of the viral replicative cycle.</text>
</comment>
<comment type="domain">
    <text evidence="1">Three N-terminal domains of hexon-interlacing protein form triskelions between hexon capsomers.</text>
</comment>
<comment type="miscellaneous">
    <text evidence="1">This protein is only encoded by mastadenoviruses, and may therefore play a role in mammals tropism.</text>
</comment>
<comment type="similarity">
    <text evidence="1 3">Belongs to the adenoviridae hexon-interlacing protein family.</text>
</comment>
<keyword id="KW-1232">Capsid decoration protein</keyword>
<keyword id="KW-0167">Capsid protein</keyword>
<keyword id="KW-0175">Coiled coil</keyword>
<keyword id="KW-1048">Host nucleus</keyword>
<keyword id="KW-0945">Host-virus interaction</keyword>
<keyword id="KW-0946">Virion</keyword>
<keyword id="KW-1160">Virus entry into host cell</keyword>
<sequence>MDPQQKGIVNTCFLTTRIPSWAGARQNVTGSDLGGKPVPSDVLESGRPLAAPRVRTLYEEQQLNMLTVNVILDDLKTQVAAMQNSVTAIQEELKDLKQRVAAR</sequence>
<proteinExistence type="inferred from homology"/>
<feature type="chain" id="PRO_0000221851" description="Hexon-interlacing protein" evidence="1">
    <location>
        <begin position="1"/>
        <end position="103"/>
    </location>
</feature>
<feature type="region of interest" description="Disordered" evidence="2">
    <location>
        <begin position="25"/>
        <end position="45"/>
    </location>
</feature>
<feature type="coiled-coil region" evidence="1">
    <location>
        <begin position="72"/>
        <end position="99"/>
    </location>
</feature>
<accession>P68968</accession>
<accession>Q65944</accession>
<reference key="1">
    <citation type="submission" date="1996-08" db="EMBL/GenBank/DDBJ databases">
        <title>DNA sequence and genomic organization of canine adenovirus type 1.</title>
        <authorList>
            <person name="Campbell J.B."/>
            <person name="Zhao Y."/>
        </authorList>
    </citation>
    <scope>NUCLEOTIDE SEQUENCE [LARGE SCALE GENOMIC DNA]</scope>
</reference>
<evidence type="ECO:0000255" key="1">
    <source>
        <dbReference type="HAMAP-Rule" id="MF_04050"/>
    </source>
</evidence>
<evidence type="ECO:0000256" key="2">
    <source>
        <dbReference type="SAM" id="MobiDB-lite"/>
    </source>
</evidence>
<evidence type="ECO:0000305" key="3"/>
<name>CAP9_ADECC</name>
<dbReference type="EMBL" id="U55001">
    <property type="protein sequence ID" value="AAB05432.1"/>
    <property type="molecule type" value="Genomic_DNA"/>
</dbReference>
<dbReference type="RefSeq" id="AP_000048.1">
    <property type="nucleotide sequence ID" value="AC_000003.1"/>
</dbReference>
<dbReference type="SMR" id="P68968"/>
<dbReference type="GO" id="GO:0042025">
    <property type="term" value="C:host cell nucleus"/>
    <property type="evidence" value="ECO:0007669"/>
    <property type="project" value="UniProtKB-SubCell"/>
</dbReference>
<dbReference type="GO" id="GO:0098021">
    <property type="term" value="C:viral capsid, decoration"/>
    <property type="evidence" value="ECO:0007669"/>
    <property type="project" value="UniProtKB-UniRule"/>
</dbReference>
<dbReference type="GO" id="GO:0031423">
    <property type="term" value="F:hexon binding"/>
    <property type="evidence" value="ECO:0007669"/>
    <property type="project" value="InterPro"/>
</dbReference>
<dbReference type="GO" id="GO:0046718">
    <property type="term" value="P:symbiont entry into host cell"/>
    <property type="evidence" value="ECO:0007669"/>
    <property type="project" value="UniProtKB-UniRule"/>
</dbReference>
<dbReference type="HAMAP" id="MF_04050">
    <property type="entry name" value="ADV_CAP9"/>
    <property type="match status" value="1"/>
</dbReference>
<dbReference type="InterPro" id="IPR005641">
    <property type="entry name" value="Hexon_assoc_IX"/>
</dbReference>
<dbReference type="Pfam" id="PF03955">
    <property type="entry name" value="Adeno_PIX"/>
    <property type="match status" value="1"/>
</dbReference>
<protein>
    <recommendedName>
        <fullName evidence="1">Hexon-interlacing protein</fullName>
    </recommendedName>
    <alternativeName>
        <fullName evidence="1">Protein IX</fullName>
    </alternativeName>
</protein>